<comment type="function">
    <text evidence="1">Catalyzes the interconversion of 2-phosphoglycerate and 3-phosphoglycerate.</text>
</comment>
<comment type="catalytic activity">
    <reaction>
        <text>(2R)-2-phosphoglycerate = (2R)-3-phosphoglycerate</text>
        <dbReference type="Rhea" id="RHEA:15901"/>
        <dbReference type="ChEBI" id="CHEBI:58272"/>
        <dbReference type="ChEBI" id="CHEBI:58289"/>
        <dbReference type="EC" id="5.4.2.12"/>
    </reaction>
</comment>
<comment type="pathway">
    <text>Carbohydrate degradation; glycolysis; pyruvate from D-glyceraldehyde 3-phosphate: step 3/5.</text>
</comment>
<comment type="similarity">
    <text evidence="2">Belongs to the BPG-independent phosphoglycerate mutase family. A-PGAM subfamily.</text>
</comment>
<protein>
    <recommendedName>
        <fullName>2,3-bisphosphoglycerate-independent phosphoglycerate mutase 2</fullName>
        <shortName>BPG-independent PGAM 2</shortName>
        <shortName>Phosphoglyceromutase 2</shortName>
        <shortName>aPGAM 2</shortName>
        <ecNumber>5.4.2.12</ecNumber>
    </recommendedName>
</protein>
<dbReference type="EC" id="5.4.2.12"/>
<dbReference type="EMBL" id="AE000666">
    <property type="protein sequence ID" value="AAB84924.1"/>
    <property type="molecule type" value="Genomic_DNA"/>
</dbReference>
<dbReference type="PIR" id="D69154">
    <property type="entry name" value="D69154"/>
</dbReference>
<dbReference type="SMR" id="O26518"/>
<dbReference type="STRING" id="187420.MTH_418"/>
<dbReference type="PaxDb" id="187420-MTH_418"/>
<dbReference type="EnsemblBacteria" id="AAB84924">
    <property type="protein sequence ID" value="AAB84924"/>
    <property type="gene ID" value="MTH_418"/>
</dbReference>
<dbReference type="KEGG" id="mth:MTH_418"/>
<dbReference type="PATRIC" id="fig|187420.15.peg.388"/>
<dbReference type="HOGENOM" id="CLU_034906_2_0_2"/>
<dbReference type="InParanoid" id="O26518"/>
<dbReference type="BioCyc" id="MetaCyc:MONOMER-14535"/>
<dbReference type="UniPathway" id="UPA00109">
    <property type="reaction ID" value="UER00186"/>
</dbReference>
<dbReference type="Proteomes" id="UP000005223">
    <property type="component" value="Chromosome"/>
</dbReference>
<dbReference type="GO" id="GO:0046872">
    <property type="term" value="F:metal ion binding"/>
    <property type="evidence" value="ECO:0007669"/>
    <property type="project" value="InterPro"/>
</dbReference>
<dbReference type="GO" id="GO:0004619">
    <property type="term" value="F:phosphoglycerate mutase activity"/>
    <property type="evidence" value="ECO:0007669"/>
    <property type="project" value="UniProtKB-EC"/>
</dbReference>
<dbReference type="GO" id="GO:0006096">
    <property type="term" value="P:glycolytic process"/>
    <property type="evidence" value="ECO:0007669"/>
    <property type="project" value="UniProtKB-UniRule"/>
</dbReference>
<dbReference type="CDD" id="cd16011">
    <property type="entry name" value="iPGM_like"/>
    <property type="match status" value="1"/>
</dbReference>
<dbReference type="Gene3D" id="3.40.720.10">
    <property type="entry name" value="Alkaline Phosphatase, subunit A"/>
    <property type="match status" value="2"/>
</dbReference>
<dbReference type="HAMAP" id="MF_01402_A">
    <property type="entry name" value="ApgM_A"/>
    <property type="match status" value="1"/>
</dbReference>
<dbReference type="InterPro" id="IPR017850">
    <property type="entry name" value="Alkaline_phosphatase_core_sf"/>
</dbReference>
<dbReference type="InterPro" id="IPR023665">
    <property type="entry name" value="ApgAM_prokaryotes"/>
</dbReference>
<dbReference type="InterPro" id="IPR006124">
    <property type="entry name" value="Metalloenzyme"/>
</dbReference>
<dbReference type="InterPro" id="IPR004456">
    <property type="entry name" value="Pglycerate_mutase_ApgM"/>
</dbReference>
<dbReference type="NCBIfam" id="TIGR00306">
    <property type="entry name" value="apgM"/>
    <property type="match status" value="1"/>
</dbReference>
<dbReference type="NCBIfam" id="TIGR02535">
    <property type="entry name" value="hyp_Hser_kinase"/>
    <property type="match status" value="1"/>
</dbReference>
<dbReference type="NCBIfam" id="NF003242">
    <property type="entry name" value="PRK04200.1"/>
    <property type="match status" value="1"/>
</dbReference>
<dbReference type="PANTHER" id="PTHR31209:SF4">
    <property type="entry name" value="2,3-BISPHOSPHOGLYCERATE-INDEPENDENT PHOSPHOGLYCERATE MUTASE"/>
    <property type="match status" value="1"/>
</dbReference>
<dbReference type="PANTHER" id="PTHR31209">
    <property type="entry name" value="COFACTOR-INDEPENDENT PHOSPHOGLYCERATE MUTASE"/>
    <property type="match status" value="1"/>
</dbReference>
<dbReference type="Pfam" id="PF01676">
    <property type="entry name" value="Metalloenzyme"/>
    <property type="match status" value="1"/>
</dbReference>
<dbReference type="Pfam" id="PF10143">
    <property type="entry name" value="PhosphMutase"/>
    <property type="match status" value="1"/>
</dbReference>
<dbReference type="PIRSF" id="PIRSF006392">
    <property type="entry name" value="IPGAM_arch"/>
    <property type="match status" value="1"/>
</dbReference>
<dbReference type="SUPFAM" id="SSF53649">
    <property type="entry name" value="Alkaline phosphatase-like"/>
    <property type="match status" value="1"/>
</dbReference>
<reference key="1">
    <citation type="journal article" date="1997" name="J. Bacteriol.">
        <title>Complete genome sequence of Methanobacterium thermoautotrophicum deltaH: functional analysis and comparative genomics.</title>
        <authorList>
            <person name="Smith D.R."/>
            <person name="Doucette-Stamm L.A."/>
            <person name="Deloughery C."/>
            <person name="Lee H.-M."/>
            <person name="Dubois J."/>
            <person name="Aldredge T."/>
            <person name="Bashirzadeh R."/>
            <person name="Blakely D."/>
            <person name="Cook R."/>
            <person name="Gilbert K."/>
            <person name="Harrison D."/>
            <person name="Hoang L."/>
            <person name="Keagle P."/>
            <person name="Lumm W."/>
            <person name="Pothier B."/>
            <person name="Qiu D."/>
            <person name="Spadafora R."/>
            <person name="Vicare R."/>
            <person name="Wang Y."/>
            <person name="Wierzbowski J."/>
            <person name="Gibson R."/>
            <person name="Jiwani N."/>
            <person name="Caruso A."/>
            <person name="Bush D."/>
            <person name="Safer H."/>
            <person name="Patwell D."/>
            <person name="Prabhakar S."/>
            <person name="McDougall S."/>
            <person name="Shimer G."/>
            <person name="Goyal A."/>
            <person name="Pietrovski S."/>
            <person name="Church G.M."/>
            <person name="Daniels C.J."/>
            <person name="Mao J.-I."/>
            <person name="Rice P."/>
            <person name="Noelling J."/>
            <person name="Reeve J.N."/>
        </authorList>
    </citation>
    <scope>NUCLEOTIDE SEQUENCE [LARGE SCALE GENOMIC DNA]</scope>
    <source>
        <strain>ATCC 29096 / DSM 1053 / JCM 10044 / NBRC 100330 / Delta H</strain>
    </source>
</reference>
<accession>O26518</accession>
<sequence>MITMKHVILVGDGMADYPLDELDGKTPLQVADKPNMDQLAGMGACGLLRTVPEGMEAGSDVANLSIMGYDPRRYYTGRGPLEAASIGVELGDDDVAFRCNLINADERIVDFNAGHIETAEASSLIDALNHELETRGRFYAGVSYRNLFVIEGRGYTSVRVEPPHDIVGESVAAHLPSGSEEADHIRELMLESAGVLRSHEVNLKRESMGKRPATMIWLWGQGLRPSMEPFSERYGIRGATITAVDLIKGLGVYAGLENIHVPGATGYLDTDYRAKGRYAAGALEEYDFLYVHVEAPDEAGHAGDAEEKIRAIENIDRFVLGRLLDALSDHEHRIAVLPDHPTPIEIRTHVPDPVPCILAGDGVDADQVKSYDEFTVREGSLGTWEAHRLMEIMMDPAARLRQ</sequence>
<evidence type="ECO:0000250" key="1"/>
<evidence type="ECO:0000305" key="2"/>
<proteinExistence type="inferred from homology"/>
<name>APGM2_METTH</name>
<feature type="chain" id="PRO_0000138140" description="2,3-bisphosphoglycerate-independent phosphoglycerate mutase 2">
    <location>
        <begin position="1"/>
        <end position="402"/>
    </location>
</feature>
<gene>
    <name type="primary">apgM2</name>
    <name type="ordered locus">MTH_418</name>
</gene>
<organism>
    <name type="scientific">Methanothermobacter thermautotrophicus (strain ATCC 29096 / DSM 1053 / JCM 10044 / NBRC 100330 / Delta H)</name>
    <name type="common">Methanobacterium thermoautotrophicum</name>
    <dbReference type="NCBI Taxonomy" id="187420"/>
    <lineage>
        <taxon>Archaea</taxon>
        <taxon>Methanobacteriati</taxon>
        <taxon>Methanobacteriota</taxon>
        <taxon>Methanomada group</taxon>
        <taxon>Methanobacteria</taxon>
        <taxon>Methanobacteriales</taxon>
        <taxon>Methanobacteriaceae</taxon>
        <taxon>Methanothermobacter</taxon>
    </lineage>
</organism>
<keyword id="KW-0324">Glycolysis</keyword>
<keyword id="KW-0413">Isomerase</keyword>
<keyword id="KW-1185">Reference proteome</keyword>